<organism>
    <name type="scientific">Pasteurella multocida (strain Pm70)</name>
    <dbReference type="NCBI Taxonomy" id="272843"/>
    <lineage>
        <taxon>Bacteria</taxon>
        <taxon>Pseudomonadati</taxon>
        <taxon>Pseudomonadota</taxon>
        <taxon>Gammaproteobacteria</taxon>
        <taxon>Pasteurellales</taxon>
        <taxon>Pasteurellaceae</taxon>
        <taxon>Pasteurella</taxon>
    </lineage>
</organism>
<name>HIS4_PASMU</name>
<keyword id="KW-0028">Amino-acid biosynthesis</keyword>
<keyword id="KW-0963">Cytoplasm</keyword>
<keyword id="KW-0368">Histidine biosynthesis</keyword>
<keyword id="KW-0413">Isomerase</keyword>
<keyword id="KW-1185">Reference proteome</keyword>
<protein>
    <recommendedName>
        <fullName>1-(5-phosphoribosyl)-5-[(5-phosphoribosylamino)methylideneamino] imidazole-4-carboxamide isomerase</fullName>
        <ecNumber>5.3.1.16</ecNumber>
    </recommendedName>
    <alternativeName>
        <fullName>Phosphoribosylformimino-5-aminoimidazole carboxamide ribotide isomerase</fullName>
    </alternativeName>
</protein>
<dbReference type="EC" id="5.3.1.16"/>
<dbReference type="EMBL" id="AE004439">
    <property type="protein sequence ID" value="AAK03287.1"/>
    <property type="molecule type" value="Genomic_DNA"/>
</dbReference>
<dbReference type="RefSeq" id="WP_010907070.1">
    <property type="nucleotide sequence ID" value="NC_002663.1"/>
</dbReference>
<dbReference type="SMR" id="Q9CLM1"/>
<dbReference type="STRING" id="272843.PM1203"/>
<dbReference type="EnsemblBacteria" id="AAK03287">
    <property type="protein sequence ID" value="AAK03287"/>
    <property type="gene ID" value="PM1203"/>
</dbReference>
<dbReference type="KEGG" id="pmu:PM1203"/>
<dbReference type="PATRIC" id="fig|272843.6.peg.1214"/>
<dbReference type="HOGENOM" id="CLU_048577_1_2_6"/>
<dbReference type="OrthoDB" id="9807749at2"/>
<dbReference type="UniPathway" id="UPA00031">
    <property type="reaction ID" value="UER00009"/>
</dbReference>
<dbReference type="Proteomes" id="UP000000809">
    <property type="component" value="Chromosome"/>
</dbReference>
<dbReference type="GO" id="GO:0005737">
    <property type="term" value="C:cytoplasm"/>
    <property type="evidence" value="ECO:0007669"/>
    <property type="project" value="UniProtKB-SubCell"/>
</dbReference>
<dbReference type="GO" id="GO:0003949">
    <property type="term" value="F:1-(5-phosphoribosyl)-5-[(5-phosphoribosylamino)methylideneamino]imidazole-4-carboxamide isomerase activity"/>
    <property type="evidence" value="ECO:0007669"/>
    <property type="project" value="UniProtKB-UniRule"/>
</dbReference>
<dbReference type="GO" id="GO:0000105">
    <property type="term" value="P:L-histidine biosynthetic process"/>
    <property type="evidence" value="ECO:0007669"/>
    <property type="project" value="UniProtKB-UniRule"/>
</dbReference>
<dbReference type="GO" id="GO:0000162">
    <property type="term" value="P:L-tryptophan biosynthetic process"/>
    <property type="evidence" value="ECO:0007669"/>
    <property type="project" value="TreeGrafter"/>
</dbReference>
<dbReference type="CDD" id="cd04732">
    <property type="entry name" value="HisA"/>
    <property type="match status" value="1"/>
</dbReference>
<dbReference type="FunFam" id="3.20.20.70:FF:000009">
    <property type="entry name" value="1-(5-phosphoribosyl)-5-[(5-phosphoribosylamino)methylideneamino] imidazole-4-carboxamide isomerase"/>
    <property type="match status" value="1"/>
</dbReference>
<dbReference type="Gene3D" id="3.20.20.70">
    <property type="entry name" value="Aldolase class I"/>
    <property type="match status" value="1"/>
</dbReference>
<dbReference type="HAMAP" id="MF_01014">
    <property type="entry name" value="HisA"/>
    <property type="match status" value="1"/>
</dbReference>
<dbReference type="InterPro" id="IPR013785">
    <property type="entry name" value="Aldolase_TIM"/>
</dbReference>
<dbReference type="InterPro" id="IPR006062">
    <property type="entry name" value="His_biosynth"/>
</dbReference>
<dbReference type="InterPro" id="IPR006063">
    <property type="entry name" value="HisA_bact_arch"/>
</dbReference>
<dbReference type="InterPro" id="IPR044524">
    <property type="entry name" value="Isoase_HisA-like"/>
</dbReference>
<dbReference type="InterPro" id="IPR023016">
    <property type="entry name" value="Isoase_HisA-like_bact"/>
</dbReference>
<dbReference type="InterPro" id="IPR011060">
    <property type="entry name" value="RibuloseP-bd_barrel"/>
</dbReference>
<dbReference type="NCBIfam" id="TIGR00007">
    <property type="entry name" value="1-(5-phosphoribosyl)-5-[(5-phosphoribosylamino)methylideneamino]imidazole-4-carboxamide isomerase"/>
    <property type="match status" value="1"/>
</dbReference>
<dbReference type="PANTHER" id="PTHR43090">
    <property type="entry name" value="1-(5-PHOSPHORIBOSYL)-5-[(5-PHOSPHORIBOSYLAMINO)METHYLIDENEAMINO] IMIDAZOLE-4-CARBOXAMIDE ISOMERASE"/>
    <property type="match status" value="1"/>
</dbReference>
<dbReference type="PANTHER" id="PTHR43090:SF2">
    <property type="entry name" value="1-(5-PHOSPHORIBOSYL)-5-[(5-PHOSPHORIBOSYLAMINO)METHYLIDENEAMINO] IMIDAZOLE-4-CARBOXAMIDE ISOMERASE"/>
    <property type="match status" value="1"/>
</dbReference>
<dbReference type="Pfam" id="PF00977">
    <property type="entry name" value="His_biosynth"/>
    <property type="match status" value="1"/>
</dbReference>
<dbReference type="SUPFAM" id="SSF51366">
    <property type="entry name" value="Ribulose-phoshate binding barrel"/>
    <property type="match status" value="1"/>
</dbReference>
<accession>Q9CLM1</accession>
<reference key="1">
    <citation type="journal article" date="2001" name="Proc. Natl. Acad. Sci. U.S.A.">
        <title>Complete genomic sequence of Pasteurella multocida Pm70.</title>
        <authorList>
            <person name="May B.J."/>
            <person name="Zhang Q."/>
            <person name="Li L.L."/>
            <person name="Paustian M.L."/>
            <person name="Whittam T.S."/>
            <person name="Kapur V."/>
        </authorList>
    </citation>
    <scope>NUCLEOTIDE SEQUENCE [LARGE SCALE GENOMIC DNA]</scope>
    <source>
        <strain>Pm70</strain>
    </source>
</reference>
<evidence type="ECO:0000250" key="1"/>
<evidence type="ECO:0000305" key="2"/>
<sequence>MKTSQIIPALDLIDGQVVRLYQGDYGQKTLYSDNPIAQFQDYVAQGAKYLHLVDLTGAKDPTKRQTQLIGEIINAVNCSIQVGGGIRTEQDVADLLAVGANRVVIGSTAVKQPEMVKQWFKKYGAEKFVLALDVNINAQGEKQIAVSGWQENSGVSLEALIADFREVGLQHVLCTDISKDGTLQGSNVALYQEICTQFPTIQFQSSGGIGSIADIDALKGTGVAGVIVGRALLEGKFNVQEAIACWQNA</sequence>
<comment type="catalytic activity">
    <reaction>
        <text>1-(5-phospho-beta-D-ribosyl)-5-[(5-phospho-beta-D-ribosylamino)methylideneamino]imidazole-4-carboxamide = 5-[(5-phospho-1-deoxy-D-ribulos-1-ylimino)methylamino]-1-(5-phospho-beta-D-ribosyl)imidazole-4-carboxamide</text>
        <dbReference type="Rhea" id="RHEA:15469"/>
        <dbReference type="ChEBI" id="CHEBI:58435"/>
        <dbReference type="ChEBI" id="CHEBI:58525"/>
        <dbReference type="EC" id="5.3.1.16"/>
    </reaction>
</comment>
<comment type="pathway">
    <text>Amino-acid biosynthesis; L-histidine biosynthesis; L-histidine from 5-phospho-alpha-D-ribose 1-diphosphate: step 4/9.</text>
</comment>
<comment type="subcellular location">
    <subcellularLocation>
        <location evidence="1">Cytoplasm</location>
    </subcellularLocation>
</comment>
<comment type="similarity">
    <text evidence="2">Belongs to the HisA/HisF family.</text>
</comment>
<gene>
    <name type="primary">hisA</name>
    <name type="ordered locus">PM1203</name>
</gene>
<proteinExistence type="inferred from homology"/>
<feature type="chain" id="PRO_0000142030" description="1-(5-phosphoribosyl)-5-[(5-phosphoribosylamino)methylideneamino] imidazole-4-carboxamide isomerase">
    <location>
        <begin position="1"/>
        <end position="249"/>
    </location>
</feature>
<feature type="active site" description="Proton acceptor" evidence="1">
    <location>
        <position position="11"/>
    </location>
</feature>
<feature type="active site" description="Proton donor" evidence="1">
    <location>
        <position position="133"/>
    </location>
</feature>